<keyword id="KW-0010">Activator</keyword>
<keyword id="KW-0539">Nucleus</keyword>
<keyword id="KW-1185">Reference proteome</keyword>
<keyword id="KW-0804">Transcription</keyword>
<keyword id="KW-0805">Transcription regulation</keyword>
<reference key="1">
    <citation type="journal article" date="2004" name="Nature">
        <title>Genome evolution in yeasts.</title>
        <authorList>
            <person name="Dujon B."/>
            <person name="Sherman D."/>
            <person name="Fischer G."/>
            <person name="Durrens P."/>
            <person name="Casaregola S."/>
            <person name="Lafontaine I."/>
            <person name="de Montigny J."/>
            <person name="Marck C."/>
            <person name="Neuveglise C."/>
            <person name="Talla E."/>
            <person name="Goffard N."/>
            <person name="Frangeul L."/>
            <person name="Aigle M."/>
            <person name="Anthouard V."/>
            <person name="Babour A."/>
            <person name="Barbe V."/>
            <person name="Barnay S."/>
            <person name="Blanchin S."/>
            <person name="Beckerich J.-M."/>
            <person name="Beyne E."/>
            <person name="Bleykasten C."/>
            <person name="Boisrame A."/>
            <person name="Boyer J."/>
            <person name="Cattolico L."/>
            <person name="Confanioleri F."/>
            <person name="de Daruvar A."/>
            <person name="Despons L."/>
            <person name="Fabre E."/>
            <person name="Fairhead C."/>
            <person name="Ferry-Dumazet H."/>
            <person name="Groppi A."/>
            <person name="Hantraye F."/>
            <person name="Hennequin C."/>
            <person name="Jauniaux N."/>
            <person name="Joyet P."/>
            <person name="Kachouri R."/>
            <person name="Kerrest A."/>
            <person name="Koszul R."/>
            <person name="Lemaire M."/>
            <person name="Lesur I."/>
            <person name="Ma L."/>
            <person name="Muller H."/>
            <person name="Nicaud J.-M."/>
            <person name="Nikolski M."/>
            <person name="Oztas S."/>
            <person name="Ozier-Kalogeropoulos O."/>
            <person name="Pellenz S."/>
            <person name="Potier S."/>
            <person name="Richard G.-F."/>
            <person name="Straub M.-L."/>
            <person name="Suleau A."/>
            <person name="Swennen D."/>
            <person name="Tekaia F."/>
            <person name="Wesolowski-Louvel M."/>
            <person name="Westhof E."/>
            <person name="Wirth B."/>
            <person name="Zeniou-Meyer M."/>
            <person name="Zivanovic Y."/>
            <person name="Bolotin-Fukuhara M."/>
            <person name="Thierry A."/>
            <person name="Bouchier C."/>
            <person name="Caudron B."/>
            <person name="Scarpelli C."/>
            <person name="Gaillardin C."/>
            <person name="Weissenbach J."/>
            <person name="Wincker P."/>
            <person name="Souciet J.-L."/>
        </authorList>
    </citation>
    <scope>NUCLEOTIDE SEQUENCE [LARGE SCALE GENOMIC DNA]</scope>
    <source>
        <strain>ATCC 8585 / CBS 2359 / DSM 70799 / NBRC 1267 / NRRL Y-1140 / WM37</strain>
    </source>
</reference>
<sequence length="255" mass="29006">MVQQLALFSAIEDESYPLSVETLTILSSNRPRLFANFNKIYKPNPSLQIEKVNAKNQLVEQTRVKLSTAVPLSKLGNGAELNYHFMEKLSNDDIESFNVKSYIQDIDSNNKTNWAFQISDIPAAGNNRKLSSQTIHESVIQSSSGSVSSFIDELGYVNDFQYINVGVKFQFLSGVVMEIYKVWQVVQKDQEVSMKLITKDGFMIKAMYNVNKSTDIESLNNGSQLLLKLKTDLRDYIELDIPDRKCMDTRLNHLD</sequence>
<dbReference type="EMBL" id="CR382124">
    <property type="protein sequence ID" value="CAH00835.1"/>
    <property type="molecule type" value="Genomic_DNA"/>
</dbReference>
<dbReference type="RefSeq" id="XP_453739.1">
    <property type="nucleotide sequence ID" value="XM_453739.1"/>
</dbReference>
<dbReference type="SMR" id="Q6CQQ0"/>
<dbReference type="FunCoup" id="Q6CQQ0">
    <property type="interactions" value="150"/>
</dbReference>
<dbReference type="STRING" id="284590.Q6CQQ0"/>
<dbReference type="PaxDb" id="284590-Q6CQQ0"/>
<dbReference type="KEGG" id="kla:KLLA0_D15290g"/>
<dbReference type="eggNOG" id="ENOG502RXWG">
    <property type="taxonomic scope" value="Eukaryota"/>
</dbReference>
<dbReference type="HOGENOM" id="CLU_058255_1_0_1"/>
<dbReference type="InParanoid" id="Q6CQQ0"/>
<dbReference type="OMA" id="PDRKCMD"/>
<dbReference type="Proteomes" id="UP000000598">
    <property type="component" value="Chromosome D"/>
</dbReference>
<dbReference type="GO" id="GO:0070847">
    <property type="term" value="C:core mediator complex"/>
    <property type="evidence" value="ECO:0007669"/>
    <property type="project" value="TreeGrafter"/>
</dbReference>
<dbReference type="GO" id="GO:0016592">
    <property type="term" value="C:mediator complex"/>
    <property type="evidence" value="ECO:0007669"/>
    <property type="project" value="InterPro"/>
</dbReference>
<dbReference type="GO" id="GO:0003712">
    <property type="term" value="F:transcription coregulator activity"/>
    <property type="evidence" value="ECO:0007669"/>
    <property type="project" value="InterPro"/>
</dbReference>
<dbReference type="GO" id="GO:0006357">
    <property type="term" value="P:regulation of transcription by RNA polymerase II"/>
    <property type="evidence" value="ECO:0007669"/>
    <property type="project" value="InterPro"/>
</dbReference>
<dbReference type="GO" id="GO:0006369">
    <property type="term" value="P:termination of RNA polymerase II transcription"/>
    <property type="evidence" value="ECO:0007669"/>
    <property type="project" value="TreeGrafter"/>
</dbReference>
<dbReference type="Gene3D" id="2.40.320.10">
    <property type="entry name" value="Hypothetical Protein Pfu-838710-001"/>
    <property type="match status" value="1"/>
</dbReference>
<dbReference type="InterPro" id="IPR019095">
    <property type="entry name" value="Mediator_Med18"/>
</dbReference>
<dbReference type="PANTHER" id="PTHR13321:SF2">
    <property type="entry name" value="MEDIATOR OF RNA POLYMERASE II TRANSCRIPTION SUBUNIT 18"/>
    <property type="match status" value="1"/>
</dbReference>
<dbReference type="PANTHER" id="PTHR13321">
    <property type="entry name" value="MEDIATOR OF RNA POLYMERASE II TRANSCRIPTION, SUBUNIT 18"/>
    <property type="match status" value="1"/>
</dbReference>
<dbReference type="Pfam" id="PF09637">
    <property type="entry name" value="Med18"/>
    <property type="match status" value="1"/>
</dbReference>
<organism>
    <name type="scientific">Kluyveromyces lactis (strain ATCC 8585 / CBS 2359 / DSM 70799 / NBRC 1267 / NRRL Y-1140 / WM37)</name>
    <name type="common">Yeast</name>
    <name type="synonym">Candida sphaerica</name>
    <dbReference type="NCBI Taxonomy" id="284590"/>
    <lineage>
        <taxon>Eukaryota</taxon>
        <taxon>Fungi</taxon>
        <taxon>Dikarya</taxon>
        <taxon>Ascomycota</taxon>
        <taxon>Saccharomycotina</taxon>
        <taxon>Saccharomycetes</taxon>
        <taxon>Saccharomycetales</taxon>
        <taxon>Saccharomycetaceae</taxon>
        <taxon>Kluyveromyces</taxon>
    </lineage>
</organism>
<proteinExistence type="inferred from homology"/>
<gene>
    <name type="primary">SRB5</name>
    <name type="synonym">MED18</name>
    <name type="ordered locus">KLLA0D15290g</name>
</gene>
<evidence type="ECO:0000250" key="1"/>
<evidence type="ECO:0000305" key="2"/>
<name>MED18_KLULA</name>
<feature type="chain" id="PRO_0000304762" description="Mediator of RNA polymerase II transcription subunit 18">
    <location>
        <begin position="1"/>
        <end position="255"/>
    </location>
</feature>
<protein>
    <recommendedName>
        <fullName>Mediator of RNA polymerase II transcription subunit 18</fullName>
    </recommendedName>
    <alternativeName>
        <fullName>Mediator complex subunit 18</fullName>
    </alternativeName>
</protein>
<comment type="function">
    <text evidence="1">Component of the Mediator complex, a coactivator involved in the regulated transcription of nearly all RNA polymerase II-dependent genes. Mediator functions as a bridge to convey information from gene-specific regulatory proteins to the basal RNA polymerase II transcription machinery. Mediator is recruited to promoters by direct interactions with regulatory proteins and serves as a scaffold for the assembly of a functional preinitiation complex with RNA polymerase II and the general transcription factors (By similarity).</text>
</comment>
<comment type="subunit">
    <text evidence="1">Component of the Mediator complex.</text>
</comment>
<comment type="subcellular location">
    <subcellularLocation>
        <location evidence="1">Nucleus</location>
    </subcellularLocation>
</comment>
<comment type="similarity">
    <text evidence="2">Belongs to the Mediator complex subunit 18 family.</text>
</comment>
<accession>Q6CQQ0</accession>